<dbReference type="EMBL" id="BX950851">
    <property type="protein sequence ID" value="CAG77413.1"/>
    <property type="molecule type" value="Genomic_DNA"/>
</dbReference>
<dbReference type="RefSeq" id="WP_011095970.1">
    <property type="nucleotide sequence ID" value="NC_004547.2"/>
</dbReference>
<dbReference type="SMR" id="Q6CYI9"/>
<dbReference type="STRING" id="218491.ECA4518"/>
<dbReference type="GeneID" id="57211204"/>
<dbReference type="KEGG" id="eca:ECA4518"/>
<dbReference type="eggNOG" id="COG0356">
    <property type="taxonomic scope" value="Bacteria"/>
</dbReference>
<dbReference type="HOGENOM" id="CLU_041018_1_0_6"/>
<dbReference type="OrthoDB" id="9789241at2"/>
<dbReference type="Proteomes" id="UP000007966">
    <property type="component" value="Chromosome"/>
</dbReference>
<dbReference type="GO" id="GO:0005886">
    <property type="term" value="C:plasma membrane"/>
    <property type="evidence" value="ECO:0007669"/>
    <property type="project" value="UniProtKB-SubCell"/>
</dbReference>
<dbReference type="GO" id="GO:0045259">
    <property type="term" value="C:proton-transporting ATP synthase complex"/>
    <property type="evidence" value="ECO:0007669"/>
    <property type="project" value="UniProtKB-KW"/>
</dbReference>
<dbReference type="GO" id="GO:0046933">
    <property type="term" value="F:proton-transporting ATP synthase activity, rotational mechanism"/>
    <property type="evidence" value="ECO:0007669"/>
    <property type="project" value="UniProtKB-UniRule"/>
</dbReference>
<dbReference type="GO" id="GO:0042777">
    <property type="term" value="P:proton motive force-driven plasma membrane ATP synthesis"/>
    <property type="evidence" value="ECO:0007669"/>
    <property type="project" value="TreeGrafter"/>
</dbReference>
<dbReference type="CDD" id="cd00310">
    <property type="entry name" value="ATP-synt_Fo_a_6"/>
    <property type="match status" value="1"/>
</dbReference>
<dbReference type="FunFam" id="1.20.120.220:FF:000002">
    <property type="entry name" value="ATP synthase subunit a"/>
    <property type="match status" value="1"/>
</dbReference>
<dbReference type="Gene3D" id="1.20.120.220">
    <property type="entry name" value="ATP synthase, F0 complex, subunit A"/>
    <property type="match status" value="1"/>
</dbReference>
<dbReference type="HAMAP" id="MF_01393">
    <property type="entry name" value="ATP_synth_a_bact"/>
    <property type="match status" value="1"/>
</dbReference>
<dbReference type="InterPro" id="IPR045082">
    <property type="entry name" value="ATP_syn_F0_a_bact/chloroplast"/>
</dbReference>
<dbReference type="InterPro" id="IPR000568">
    <property type="entry name" value="ATP_synth_F0_asu"/>
</dbReference>
<dbReference type="InterPro" id="IPR023011">
    <property type="entry name" value="ATP_synth_F0_asu_AS"/>
</dbReference>
<dbReference type="InterPro" id="IPR035908">
    <property type="entry name" value="F0_ATP_A_sf"/>
</dbReference>
<dbReference type="NCBIfam" id="TIGR01131">
    <property type="entry name" value="ATP_synt_6_or_A"/>
    <property type="match status" value="1"/>
</dbReference>
<dbReference type="NCBIfam" id="NF004477">
    <property type="entry name" value="PRK05815.1-1"/>
    <property type="match status" value="1"/>
</dbReference>
<dbReference type="PANTHER" id="PTHR42823">
    <property type="entry name" value="ATP SYNTHASE SUBUNIT A, CHLOROPLASTIC"/>
    <property type="match status" value="1"/>
</dbReference>
<dbReference type="PANTHER" id="PTHR42823:SF3">
    <property type="entry name" value="ATP SYNTHASE SUBUNIT A, CHLOROPLASTIC"/>
    <property type="match status" value="1"/>
</dbReference>
<dbReference type="Pfam" id="PF00119">
    <property type="entry name" value="ATP-synt_A"/>
    <property type="match status" value="1"/>
</dbReference>
<dbReference type="SUPFAM" id="SSF81336">
    <property type="entry name" value="F1F0 ATP synthase subunit A"/>
    <property type="match status" value="1"/>
</dbReference>
<dbReference type="PROSITE" id="PS00449">
    <property type="entry name" value="ATPASE_A"/>
    <property type="match status" value="1"/>
</dbReference>
<feature type="chain" id="PRO_0000362296" description="ATP synthase subunit a">
    <location>
        <begin position="1"/>
        <end position="266"/>
    </location>
</feature>
<feature type="transmembrane region" description="Helical" evidence="1">
    <location>
        <begin position="28"/>
        <end position="48"/>
    </location>
</feature>
<feature type="transmembrane region" description="Helical" evidence="1">
    <location>
        <begin position="88"/>
        <end position="108"/>
    </location>
</feature>
<feature type="transmembrane region" description="Helical" evidence="1">
    <location>
        <begin position="141"/>
        <end position="161"/>
    </location>
</feature>
<feature type="transmembrane region" description="Helical" evidence="1">
    <location>
        <begin position="206"/>
        <end position="226"/>
    </location>
</feature>
<feature type="transmembrane region" description="Helical" evidence="1">
    <location>
        <begin position="237"/>
        <end position="257"/>
    </location>
</feature>
<proteinExistence type="inferred from homology"/>
<name>ATP6_PECAS</name>
<reference key="1">
    <citation type="journal article" date="2004" name="Proc. Natl. Acad. Sci. U.S.A.">
        <title>Genome sequence of the enterobacterial phytopathogen Erwinia carotovora subsp. atroseptica and characterization of virulence factors.</title>
        <authorList>
            <person name="Bell K.S."/>
            <person name="Sebaihia M."/>
            <person name="Pritchard L."/>
            <person name="Holden M.T.G."/>
            <person name="Hyman L.J."/>
            <person name="Holeva M.C."/>
            <person name="Thomson N.R."/>
            <person name="Bentley S.D."/>
            <person name="Churcher L.J.C."/>
            <person name="Mungall K."/>
            <person name="Atkin R."/>
            <person name="Bason N."/>
            <person name="Brooks K."/>
            <person name="Chillingworth T."/>
            <person name="Clark K."/>
            <person name="Doggett J."/>
            <person name="Fraser A."/>
            <person name="Hance Z."/>
            <person name="Hauser H."/>
            <person name="Jagels K."/>
            <person name="Moule S."/>
            <person name="Norbertczak H."/>
            <person name="Ormond D."/>
            <person name="Price C."/>
            <person name="Quail M.A."/>
            <person name="Sanders M."/>
            <person name="Walker D."/>
            <person name="Whitehead S."/>
            <person name="Salmond G.P.C."/>
            <person name="Birch P.R.J."/>
            <person name="Parkhill J."/>
            <person name="Toth I.K."/>
        </authorList>
    </citation>
    <scope>NUCLEOTIDE SEQUENCE [LARGE SCALE GENOMIC DNA]</scope>
    <source>
        <strain>SCRI 1043 / ATCC BAA-672</strain>
    </source>
</reference>
<gene>
    <name evidence="1" type="primary">atpB</name>
    <name type="ordered locus">ECA4518</name>
</gene>
<evidence type="ECO:0000255" key="1">
    <source>
        <dbReference type="HAMAP-Rule" id="MF_01393"/>
    </source>
</evidence>
<keyword id="KW-0066">ATP synthesis</keyword>
<keyword id="KW-0997">Cell inner membrane</keyword>
<keyword id="KW-1003">Cell membrane</keyword>
<keyword id="KW-0138">CF(0)</keyword>
<keyword id="KW-0375">Hydrogen ion transport</keyword>
<keyword id="KW-0406">Ion transport</keyword>
<keyword id="KW-0472">Membrane</keyword>
<keyword id="KW-1185">Reference proteome</keyword>
<keyword id="KW-0812">Transmembrane</keyword>
<keyword id="KW-1133">Transmembrane helix</keyword>
<keyword id="KW-0813">Transport</keyword>
<organism>
    <name type="scientific">Pectobacterium atrosepticum (strain SCRI 1043 / ATCC BAA-672)</name>
    <name type="common">Erwinia carotovora subsp. atroseptica</name>
    <dbReference type="NCBI Taxonomy" id="218491"/>
    <lineage>
        <taxon>Bacteria</taxon>
        <taxon>Pseudomonadati</taxon>
        <taxon>Pseudomonadota</taxon>
        <taxon>Gammaproteobacteria</taxon>
        <taxon>Enterobacterales</taxon>
        <taxon>Pectobacteriaceae</taxon>
        <taxon>Pectobacterium</taxon>
    </lineage>
</organism>
<protein>
    <recommendedName>
        <fullName evidence="1">ATP synthase subunit a</fullName>
    </recommendedName>
    <alternativeName>
        <fullName evidence="1">ATP synthase F0 sector subunit a</fullName>
    </alternativeName>
    <alternativeName>
        <fullName evidence="1">F-ATPase subunit 6</fullName>
    </alternativeName>
</protein>
<sequence>MAAGEISTPQEYISHHLHHLQVGTGFWSINVDSMFFSIALGILFLVIFHRVAKRATSGVPGKLQTAVELLIGFVDGTVRDMFHGKSKLIAPLALTIFVWVFLMNMMDLLPIDLLPQLWAGVYSLLGYDPAHAYLRAVPTADVNITLSMALGVFILVLFYSIKMKGLGGFVKELTMQPFNHPVFIPINLILEGVSLLSKPISLGLRLFGNMYAGELIFILIAGLLPWWSQWLLNVPWAIFHILIITLQAFIFMVLTVVYLSMASEEH</sequence>
<comment type="function">
    <text evidence="1">Key component of the proton channel; it plays a direct role in the translocation of protons across the membrane.</text>
</comment>
<comment type="subunit">
    <text evidence="1">F-type ATPases have 2 components, CF(1) - the catalytic core - and CF(0) - the membrane proton channel. CF(1) has five subunits: alpha(3), beta(3), gamma(1), delta(1), epsilon(1). CF(0) has three main subunits: a(1), b(2) and c(9-12). The alpha and beta chains form an alternating ring which encloses part of the gamma chain. CF(1) is attached to CF(0) by a central stalk formed by the gamma and epsilon chains, while a peripheral stalk is formed by the delta and b chains.</text>
</comment>
<comment type="subcellular location">
    <subcellularLocation>
        <location evidence="1">Cell inner membrane</location>
        <topology evidence="1">Multi-pass membrane protein</topology>
    </subcellularLocation>
</comment>
<comment type="similarity">
    <text evidence="1">Belongs to the ATPase A chain family.</text>
</comment>
<accession>Q6CYI9</accession>